<dbReference type="EC" id="2.7.1.20" evidence="1 2"/>
<dbReference type="EMBL" id="AL123456">
    <property type="protein sequence ID" value="CCP44979.1"/>
    <property type="molecule type" value="Genomic_DNA"/>
</dbReference>
<dbReference type="PIR" id="C70785">
    <property type="entry name" value="C70785"/>
</dbReference>
<dbReference type="RefSeq" id="NP_216718.1">
    <property type="nucleotide sequence ID" value="NC_000962.3"/>
</dbReference>
<dbReference type="RefSeq" id="WP_003411414.1">
    <property type="nucleotide sequence ID" value="NZ_NVQJ01000008.1"/>
</dbReference>
<dbReference type="PDB" id="2PKF">
    <property type="method" value="X-ray"/>
    <property type="resolution" value="1.50 A"/>
    <property type="chains" value="A/B=1-324"/>
</dbReference>
<dbReference type="PDB" id="2PKK">
    <property type="method" value="X-ray"/>
    <property type="resolution" value="1.93 A"/>
    <property type="chains" value="A=1-324"/>
</dbReference>
<dbReference type="PDB" id="2PKM">
    <property type="method" value="X-ray"/>
    <property type="resolution" value="1.90 A"/>
    <property type="chains" value="A=1-324"/>
</dbReference>
<dbReference type="PDB" id="2PKN">
    <property type="method" value="X-ray"/>
    <property type="resolution" value="1.90 A"/>
    <property type="chains" value="A=1-324"/>
</dbReference>
<dbReference type="PDB" id="4O1G">
    <property type="method" value="X-ray"/>
    <property type="resolution" value="1.50 A"/>
    <property type="chains" value="A=1-324"/>
</dbReference>
<dbReference type="PDB" id="4PVV">
    <property type="method" value="X-ray"/>
    <property type="resolution" value="2.50 A"/>
    <property type="chains" value="A=1-324"/>
</dbReference>
<dbReference type="PDB" id="6C67">
    <property type="method" value="X-ray"/>
    <property type="resolution" value="2.11 A"/>
    <property type="chains" value="A/B=1-324"/>
</dbReference>
<dbReference type="PDB" id="6C9N">
    <property type="method" value="X-ray"/>
    <property type="resolution" value="2.10 A"/>
    <property type="chains" value="A/B=1-324"/>
</dbReference>
<dbReference type="PDB" id="6C9P">
    <property type="method" value="X-ray"/>
    <property type="resolution" value="2.00 A"/>
    <property type="chains" value="A/B=1-324"/>
</dbReference>
<dbReference type="PDB" id="6C9Q">
    <property type="method" value="X-ray"/>
    <property type="resolution" value="1.95 A"/>
    <property type="chains" value="A=1-324"/>
</dbReference>
<dbReference type="PDB" id="6C9R">
    <property type="method" value="X-ray"/>
    <property type="resolution" value="2.10 A"/>
    <property type="chains" value="A/B=1-324"/>
</dbReference>
<dbReference type="PDB" id="6C9S">
    <property type="method" value="X-ray"/>
    <property type="resolution" value="2.23 A"/>
    <property type="chains" value="A/B=1-324"/>
</dbReference>
<dbReference type="PDB" id="6C9V">
    <property type="method" value="X-ray"/>
    <property type="resolution" value="1.70 A"/>
    <property type="chains" value="A/B=1-324"/>
</dbReference>
<dbReference type="PDBsum" id="2PKF"/>
<dbReference type="PDBsum" id="2PKK"/>
<dbReference type="PDBsum" id="2PKM"/>
<dbReference type="PDBsum" id="2PKN"/>
<dbReference type="PDBsum" id="4O1G"/>
<dbReference type="PDBsum" id="4PVV"/>
<dbReference type="PDBsum" id="6C67"/>
<dbReference type="PDBsum" id="6C9N"/>
<dbReference type="PDBsum" id="6C9P"/>
<dbReference type="PDBsum" id="6C9Q"/>
<dbReference type="PDBsum" id="6C9R"/>
<dbReference type="PDBsum" id="6C9S"/>
<dbReference type="PDBsum" id="6C9V"/>
<dbReference type="SMR" id="P9WID5"/>
<dbReference type="FunCoup" id="P9WID5">
    <property type="interactions" value="37"/>
</dbReference>
<dbReference type="STRING" id="83332.Rv2202c"/>
<dbReference type="BindingDB" id="P9WID5"/>
<dbReference type="ChEMBL" id="CHEMBL4523271"/>
<dbReference type="iPTMnet" id="P9WID5"/>
<dbReference type="PaxDb" id="83332-Rv2202c"/>
<dbReference type="DNASU" id="888551"/>
<dbReference type="GeneID" id="888551"/>
<dbReference type="KEGG" id="mtu:Rv2202c"/>
<dbReference type="KEGG" id="mtv:RVBD_2202c"/>
<dbReference type="TubercuList" id="Rv2202c"/>
<dbReference type="eggNOG" id="COG0524">
    <property type="taxonomic scope" value="Bacteria"/>
</dbReference>
<dbReference type="InParanoid" id="P9WID5"/>
<dbReference type="OrthoDB" id="9779730at2"/>
<dbReference type="PhylomeDB" id="P9WID5"/>
<dbReference type="BRENDA" id="2.7.1.20">
    <property type="organism ID" value="3445"/>
</dbReference>
<dbReference type="UniPathway" id="UPA00588">
    <property type="reaction ID" value="UER00659"/>
</dbReference>
<dbReference type="EvolutionaryTrace" id="P9WID5"/>
<dbReference type="Proteomes" id="UP000001584">
    <property type="component" value="Chromosome"/>
</dbReference>
<dbReference type="GO" id="GO:0005886">
    <property type="term" value="C:plasma membrane"/>
    <property type="evidence" value="ECO:0007005"/>
    <property type="project" value="MTBBASE"/>
</dbReference>
<dbReference type="GO" id="GO:0004001">
    <property type="term" value="F:adenosine kinase activity"/>
    <property type="evidence" value="ECO:0000314"/>
    <property type="project" value="MTBBASE"/>
</dbReference>
<dbReference type="GO" id="GO:0005524">
    <property type="term" value="F:ATP binding"/>
    <property type="evidence" value="ECO:0000314"/>
    <property type="project" value="MTBBASE"/>
</dbReference>
<dbReference type="GO" id="GO:0032567">
    <property type="term" value="F:dGTP binding"/>
    <property type="evidence" value="ECO:0000314"/>
    <property type="project" value="MTBBASE"/>
</dbReference>
<dbReference type="GO" id="GO:0005525">
    <property type="term" value="F:GTP binding"/>
    <property type="evidence" value="ECO:0000314"/>
    <property type="project" value="MTBBASE"/>
</dbReference>
<dbReference type="GO" id="GO:0000287">
    <property type="term" value="F:magnesium ion binding"/>
    <property type="evidence" value="ECO:0000314"/>
    <property type="project" value="MTBBASE"/>
</dbReference>
<dbReference type="GO" id="GO:0044209">
    <property type="term" value="P:AMP salvage"/>
    <property type="evidence" value="ECO:0007669"/>
    <property type="project" value="UniProtKB-UniPathway"/>
</dbReference>
<dbReference type="GO" id="GO:0006166">
    <property type="term" value="P:purine ribonucleoside salvage"/>
    <property type="evidence" value="ECO:0007669"/>
    <property type="project" value="UniProtKB-KW"/>
</dbReference>
<dbReference type="CDD" id="cd01942">
    <property type="entry name" value="ribokinase_group_A"/>
    <property type="match status" value="1"/>
</dbReference>
<dbReference type="FunFam" id="3.40.1190.20:FF:000046">
    <property type="entry name" value="Adenosine kinase"/>
    <property type="match status" value="1"/>
</dbReference>
<dbReference type="Gene3D" id="3.40.1190.20">
    <property type="match status" value="1"/>
</dbReference>
<dbReference type="InterPro" id="IPR002173">
    <property type="entry name" value="Carboh/pur_kinase_PfkB_CS"/>
</dbReference>
<dbReference type="InterPro" id="IPR050306">
    <property type="entry name" value="PfkB_Carbo_kinase"/>
</dbReference>
<dbReference type="InterPro" id="IPR011611">
    <property type="entry name" value="PfkB_dom"/>
</dbReference>
<dbReference type="InterPro" id="IPR029056">
    <property type="entry name" value="Ribokinase-like"/>
</dbReference>
<dbReference type="PANTHER" id="PTHR43085:SF46">
    <property type="entry name" value="ADENOSINE KINASE"/>
    <property type="match status" value="1"/>
</dbReference>
<dbReference type="PANTHER" id="PTHR43085">
    <property type="entry name" value="HEXOKINASE FAMILY MEMBER"/>
    <property type="match status" value="1"/>
</dbReference>
<dbReference type="Pfam" id="PF00294">
    <property type="entry name" value="PfkB"/>
    <property type="match status" value="1"/>
</dbReference>
<dbReference type="SUPFAM" id="SSF53613">
    <property type="entry name" value="Ribokinase-like"/>
    <property type="match status" value="1"/>
</dbReference>
<dbReference type="PROSITE" id="PS00583">
    <property type="entry name" value="PFKB_KINASES_1"/>
    <property type="match status" value="1"/>
</dbReference>
<comment type="function">
    <text evidence="1 2">Catalyzes the phosphorylation of adenosine to adenosine monophosphate (AMP) (PubMed:14594827, PubMed:16511094). Can also catalyze the phosphorylation of the adenosine analog 2-methyladenosine (methyl-Ado) to methyl-AMP, the first step in the metabolism of this compound to an active form that displays antitubercular activity. Is not active on guanosine, inosine, deoxyadenosine, cytidine, uridine, or thymidine. Prefers dGTP and GTP to ATP as phosphate donors in vitro (PubMed:14594827).</text>
</comment>
<comment type="catalytic activity">
    <reaction evidence="1 2">
        <text>adenosine + ATP = AMP + ADP + H(+)</text>
        <dbReference type="Rhea" id="RHEA:20824"/>
        <dbReference type="ChEBI" id="CHEBI:15378"/>
        <dbReference type="ChEBI" id="CHEBI:16335"/>
        <dbReference type="ChEBI" id="CHEBI:30616"/>
        <dbReference type="ChEBI" id="CHEBI:456215"/>
        <dbReference type="ChEBI" id="CHEBI:456216"/>
        <dbReference type="EC" id="2.7.1.20"/>
    </reaction>
</comment>
<comment type="catalytic activity">
    <reaction evidence="1">
        <text>adenosine + GTP = GDP + AMP + H(+)</text>
        <dbReference type="Rhea" id="RHEA:52532"/>
        <dbReference type="ChEBI" id="CHEBI:15378"/>
        <dbReference type="ChEBI" id="CHEBI:16335"/>
        <dbReference type="ChEBI" id="CHEBI:37565"/>
        <dbReference type="ChEBI" id="CHEBI:58189"/>
        <dbReference type="ChEBI" id="CHEBI:456215"/>
    </reaction>
</comment>
<comment type="catalytic activity">
    <reaction evidence="1">
        <text>dGTP + adenosine = dGDP + AMP + H(+)</text>
        <dbReference type="Rhea" id="RHEA:52536"/>
        <dbReference type="ChEBI" id="CHEBI:15378"/>
        <dbReference type="ChEBI" id="CHEBI:16335"/>
        <dbReference type="ChEBI" id="CHEBI:58595"/>
        <dbReference type="ChEBI" id="CHEBI:61429"/>
        <dbReference type="ChEBI" id="CHEBI:456215"/>
    </reaction>
</comment>
<comment type="cofactor">
    <cofactor evidence="1">
        <name>Mg(2+)</name>
        <dbReference type="ChEBI" id="CHEBI:18420"/>
    </cofactor>
</comment>
<comment type="activity regulation">
    <text evidence="1 4">The enzyme is subject to substrate inhibition by adenosine and is competitively inhibited by the adenosine analog iodotubercidin. Unlike other adenosine kinases it is not stimulated by inorganic phosphate. Activity is stimulated in the presence of potassium (PubMed:14594827). Is inhibited by a series of 7-(het)aryl-7-deazaadenine ribonucleosides bearing small and bulky substituents in position 7; some of them display micromolar antimycobacterial activity and low cytotoxicity (PubMed:25259627).</text>
</comment>
<comment type="pathway">
    <text evidence="10 11">Purine metabolism; AMP biosynthesis via salvage pathway; AMP from adenosine: step 1/1.</text>
</comment>
<comment type="subunit">
    <text evidence="1 2 3">Homodimer.</text>
</comment>
<comment type="miscellaneous">
    <text evidence="12">Was identified as a high-confidence drug target.</text>
</comment>
<comment type="similarity">
    <text evidence="9">Belongs to the carbohydrate kinase PfkB family.</text>
</comment>
<organism>
    <name type="scientific">Mycobacterium tuberculosis (strain ATCC 25618 / H37Rv)</name>
    <dbReference type="NCBI Taxonomy" id="83332"/>
    <lineage>
        <taxon>Bacteria</taxon>
        <taxon>Bacillati</taxon>
        <taxon>Actinomycetota</taxon>
        <taxon>Actinomycetes</taxon>
        <taxon>Mycobacteriales</taxon>
        <taxon>Mycobacteriaceae</taxon>
        <taxon>Mycobacterium</taxon>
        <taxon>Mycobacterium tuberculosis complex</taxon>
    </lineage>
</organism>
<gene>
    <name evidence="5" type="primary">adoK</name>
    <name type="synonym">cbhK</name>
    <name type="ordered locus">Rv2202c</name>
    <name type="ORF">MTCY190.13c</name>
</gene>
<evidence type="ECO:0000269" key="1">
    <source>
    </source>
</evidence>
<evidence type="ECO:0000269" key="2">
    <source>
    </source>
</evidence>
<evidence type="ECO:0000269" key="3">
    <source>
    </source>
</evidence>
<evidence type="ECO:0000269" key="4">
    <source>
    </source>
</evidence>
<evidence type="ECO:0000303" key="5">
    <source>
    </source>
</evidence>
<evidence type="ECO:0000303" key="6">
    <source>
    </source>
</evidence>
<evidence type="ECO:0000303" key="7">
    <source>
    </source>
</evidence>
<evidence type="ECO:0000303" key="8">
    <source>
    </source>
</evidence>
<evidence type="ECO:0000305" key="9"/>
<evidence type="ECO:0000305" key="10">
    <source>
    </source>
</evidence>
<evidence type="ECO:0000305" key="11">
    <source>
    </source>
</evidence>
<evidence type="ECO:0000305" key="12">
    <source>
    </source>
</evidence>
<evidence type="ECO:0000305" key="13">
    <source>
    </source>
</evidence>
<evidence type="ECO:0007744" key="14">
    <source>
        <dbReference type="PDB" id="2PKM"/>
    </source>
</evidence>
<evidence type="ECO:0007744" key="15">
    <source>
        <dbReference type="PDB" id="2PKN"/>
    </source>
</evidence>
<evidence type="ECO:0007744" key="16">
    <source>
        <dbReference type="PDB" id="4O1G"/>
    </source>
</evidence>
<evidence type="ECO:0007744" key="17">
    <source>
    </source>
</evidence>
<evidence type="ECO:0007829" key="18">
    <source>
        <dbReference type="PDB" id="2PKF"/>
    </source>
</evidence>
<evidence type="ECO:0007829" key="19">
    <source>
        <dbReference type="PDB" id="4PVV"/>
    </source>
</evidence>
<evidence type="ECO:0007829" key="20">
    <source>
        <dbReference type="PDB" id="6C9V"/>
    </source>
</evidence>
<name>ADOK_MYCTU</name>
<proteinExistence type="evidence at protein level"/>
<keyword id="KW-0002">3D-structure</keyword>
<keyword id="KW-0007">Acetylation</keyword>
<keyword id="KW-0067">ATP-binding</keyword>
<keyword id="KW-0418">Kinase</keyword>
<keyword id="KW-0460">Magnesium</keyword>
<keyword id="KW-0547">Nucleotide-binding</keyword>
<keyword id="KW-0660">Purine salvage</keyword>
<keyword id="KW-1185">Reference proteome</keyword>
<keyword id="KW-0808">Transferase</keyword>
<sequence>MTIAVTGSIATDHLMRFPGRFSEQLLPEHLHKVSLSFLVDDLVMHRGGVAGNMAFAIGVLGGEVALVGAAGADFADYRDWLKARGVNCDHVLISETAHTARFTCTTDVDMAQIASFYPGAMSEARNIKLADVVSAIGKPELVIIGANDPEAMFLHTEECRKLGLAFAADPSQQLARLSGEEIRRLVNGAAYLFTNDYEWDLLLSKTGWSEADVMAQIDLRVTTLGPKGVDLVEPDGTTIHVGVVPETSQTDPTGVGDAFRAGFLTGRSAGLGLERSAQLGSLVAVLVLESTGTQEWQWDYEAAASRLAGAYGEHAAAEIVAVLA</sequence>
<reference key="1">
    <citation type="journal article" date="1998" name="Nature">
        <title>Deciphering the biology of Mycobacterium tuberculosis from the complete genome sequence.</title>
        <authorList>
            <person name="Cole S.T."/>
            <person name="Brosch R."/>
            <person name="Parkhill J."/>
            <person name="Garnier T."/>
            <person name="Churcher C.M."/>
            <person name="Harris D.E."/>
            <person name="Gordon S.V."/>
            <person name="Eiglmeier K."/>
            <person name="Gas S."/>
            <person name="Barry C.E. III"/>
            <person name="Tekaia F."/>
            <person name="Badcock K."/>
            <person name="Basham D."/>
            <person name="Brown D."/>
            <person name="Chillingworth T."/>
            <person name="Connor R."/>
            <person name="Davies R.M."/>
            <person name="Devlin K."/>
            <person name="Feltwell T."/>
            <person name="Gentles S."/>
            <person name="Hamlin N."/>
            <person name="Holroyd S."/>
            <person name="Hornsby T."/>
            <person name="Jagels K."/>
            <person name="Krogh A."/>
            <person name="McLean J."/>
            <person name="Moule S."/>
            <person name="Murphy L.D."/>
            <person name="Oliver S."/>
            <person name="Osborne J."/>
            <person name="Quail M.A."/>
            <person name="Rajandream M.A."/>
            <person name="Rogers J."/>
            <person name="Rutter S."/>
            <person name="Seeger K."/>
            <person name="Skelton S."/>
            <person name="Squares S."/>
            <person name="Squares R."/>
            <person name="Sulston J.E."/>
            <person name="Taylor K."/>
            <person name="Whitehead S."/>
            <person name="Barrell B.G."/>
        </authorList>
    </citation>
    <scope>NUCLEOTIDE SEQUENCE [LARGE SCALE GENOMIC DNA]</scope>
    <source>
        <strain>ATCC 25618 / H37Rv</strain>
    </source>
</reference>
<reference key="2">
    <citation type="journal article" date="2003" name="J. Bacteriol.">
        <title>Identification and characterization of a unique adenosine kinase from Mycobacterium tuberculosis.</title>
        <authorList>
            <person name="Long M.C."/>
            <person name="Escuyer V."/>
            <person name="Parker W.B."/>
        </authorList>
    </citation>
    <scope>FUNCTION</scope>
    <scope>CATALYTIC ACTIVITY</scope>
    <scope>COFACTOR</scope>
    <scope>SUBSTRATE SPECIFICITY</scope>
    <scope>SUBUNIT</scope>
    <scope>ACTIVITY REGULATION</scope>
    <scope>PATHWAY</scope>
    <source>
        <strain>H37Rv</strain>
    </source>
</reference>
<reference key="3">
    <citation type="journal article" date="2008" name="BMC Syst. Biol.">
        <title>targetTB: a target identification pipeline for Mycobacterium tuberculosis through an interactome, reactome and genome-scale structural analysis.</title>
        <authorList>
            <person name="Raman K."/>
            <person name="Yeturu K."/>
            <person name="Chandra N."/>
        </authorList>
    </citation>
    <scope>IDENTIFICATION AS A DRUG TARGET [LARGE SCALE ANALYSIS]</scope>
</reference>
<reference key="4">
    <citation type="journal article" date="2005" name="Acta Crystallogr. F">
        <title>Overexpression, purification and crystallographic analysis of a unique adenosine kinase from Mycobacterium tuberculosis.</title>
        <authorList>
            <person name="Wang Y."/>
            <person name="Long M.C."/>
            <person name="Ranganathan S."/>
            <person name="Escuyer V."/>
            <person name="Parker W.B."/>
            <person name="Li R."/>
        </authorList>
    </citation>
    <scope>CRYSTALLIZATION</scope>
    <scope>FUNCTION</scope>
    <scope>CATALYTIC ACTIVITY</scope>
    <scope>SUBUNIT</scope>
    <source>
        <strain>H37Rv</strain>
    </source>
</reference>
<reference key="5">
    <citation type="journal article" date="2011" name="Mol. Cell. Proteomics">
        <title>Proteogenomic analysis of Mycobacterium tuberculosis by high resolution mass spectrometry.</title>
        <authorList>
            <person name="Kelkar D.S."/>
            <person name="Kumar D."/>
            <person name="Kumar P."/>
            <person name="Balakrishnan L."/>
            <person name="Muthusamy B."/>
            <person name="Yadav A.K."/>
            <person name="Shrivastava P."/>
            <person name="Marimuthu A."/>
            <person name="Anand S."/>
            <person name="Sundaram H."/>
            <person name="Kingsbury R."/>
            <person name="Harsha H.C."/>
            <person name="Nair B."/>
            <person name="Prasad T.S."/>
            <person name="Chauhan D.S."/>
            <person name="Katoch K."/>
            <person name="Katoch V.M."/>
            <person name="Kumar P."/>
            <person name="Chaerkady R."/>
            <person name="Ramachandran S."/>
            <person name="Dash D."/>
            <person name="Pandey A."/>
        </authorList>
    </citation>
    <scope>ACETYLATION [LARGE SCALE ANALYSIS] AT THR-2</scope>
    <scope>CLEAVAGE OF INITIATOR METHIONINE [LARGE SCALE ANALYSIS]</scope>
    <scope>IDENTIFICATION BY MASS SPECTROMETRY [LARGE SCALE ANALYSIS]</scope>
    <source>
        <strain>ATCC 25618 / H37Rv</strain>
    </source>
</reference>
<reference key="6">
    <citation type="journal article" date="2007" name="J. Biol. Chem.">
        <title>High resolution crystal structures of Mycobacterium tuberculosis adenosine kinase: insights into the mechanism and specificity of this novel prokaryotic enzyme.</title>
        <authorList>
            <person name="Reddy M.C."/>
            <person name="Palaninathan S.K."/>
            <person name="Shetty N.D."/>
            <person name="Owen J.L."/>
            <person name="Watson M.D."/>
            <person name="Sacchettini J.C."/>
        </authorList>
    </citation>
    <scope>X-RAY CRYSTALLOGRAPHY (1.50 ANGSTROMS) OF APOENZYME AND IN COMPLEXES WITH ADENOSINE; 2-FLUOROADENOSINE AND AN ATP ANALOG</scope>
    <scope>SUBUNIT</scope>
    <scope>PATHWAY</scope>
    <scope>REACTION MECHANISM</scope>
    <scope>ACTIVE SITE</scope>
    <source>
        <strain>H37Rv</strain>
    </source>
</reference>
<reference key="7">
    <citation type="journal article" date="2014" name="J. Med. Chem.">
        <title>Structural basis for inhibition of mycobacterial and human adenosine kinase by 7-substituted 7-(het)aryl-7-deazaadenine ribonucleosides.</title>
        <authorList>
            <person name="Snasel J."/>
            <person name="Naus P."/>
            <person name="Dostal J."/>
            <person name="Hnizda A."/>
            <person name="Fanfrlik J."/>
            <person name="Brynda J."/>
            <person name="Bourderioux A."/>
            <person name="Dusek M."/>
            <person name="Dvorakova H."/>
            <person name="Stolarikova J."/>
            <person name="Zabranska H."/>
            <person name="Pohl R."/>
            <person name="Konecny P."/>
            <person name="Dzubak P."/>
            <person name="Votruba I."/>
            <person name="Hajduch M."/>
            <person name="Rezacova P."/>
            <person name="Veverka V."/>
            <person name="Hocek M."/>
            <person name="Pichova I."/>
        </authorList>
    </citation>
    <scope>X-RAY CRYSTALLOGRAPHY (1.50 ANGSTROMS) IN COMPLEXES WITH ATP ANALOG AND 7-ETHYNYL-7-DEAZAADENOSINE INHIBITOR</scope>
    <scope>ACTIVITY REGULATION</scope>
    <scope>INHIBITOR SCREENING</scope>
</reference>
<feature type="initiator methionine" description="Removed" evidence="17">
    <location>
        <position position="1"/>
    </location>
</feature>
<feature type="chain" id="PRO_0000080064" description="Adenosine kinase">
    <location>
        <begin position="2"/>
        <end position="324"/>
    </location>
</feature>
<feature type="active site" description="Proton acceptor" evidence="11">
    <location>
        <position position="257"/>
    </location>
</feature>
<feature type="binding site" description="in other chain" evidence="11 14">
    <location>
        <position position="8"/>
    </location>
    <ligand>
        <name>substrate</name>
        <note>ligand shared between dimeric partners</note>
    </ligand>
</feature>
<feature type="binding site" description="in other chain" evidence="11 14">
    <location>
        <position position="12"/>
    </location>
    <ligand>
        <name>substrate</name>
        <note>ligand shared between dimeric partners</note>
    </ligand>
</feature>
<feature type="binding site" evidence="11 14">
    <location>
        <position position="36"/>
    </location>
    <ligand>
        <name>substrate</name>
        <note>ligand shared between dimeric partners</note>
    </ligand>
</feature>
<feature type="binding site" description="in other chain" evidence="11 14">
    <location>
        <position position="48"/>
    </location>
    <ligand>
        <name>substrate</name>
        <note>ligand shared between dimeric partners</note>
    </ligand>
</feature>
<feature type="binding site" description="in other chain" evidence="11 14">
    <location>
        <position position="52"/>
    </location>
    <ligand>
        <name>substrate</name>
        <note>ligand shared between dimeric partners</note>
    </ligand>
</feature>
<feature type="binding site" description="in other chain" evidence="11 14">
    <location>
        <position position="102"/>
    </location>
    <ligand>
        <name>substrate</name>
        <note>ligand shared between dimeric partners</note>
    </ligand>
</feature>
<feature type="binding site" description="in other chain" evidence="11 14">
    <location>
        <position position="116"/>
    </location>
    <ligand>
        <name>substrate</name>
        <note>ligand shared between dimeric partners</note>
    </ligand>
</feature>
<feature type="binding site" description="in other chain" evidence="11 14">
    <location>
        <begin position="172"/>
        <end position="173"/>
    </location>
    <ligand>
        <name>substrate</name>
        <note>ligand shared between dimeric partners</note>
    </ligand>
</feature>
<feature type="binding site" evidence="11 13 16">
    <location>
        <position position="195"/>
    </location>
    <ligand>
        <name>ATP</name>
        <dbReference type="ChEBI" id="CHEBI:30616"/>
    </ligand>
</feature>
<feature type="binding site" evidence="11 13 15 16">
    <location>
        <begin position="223"/>
        <end position="228"/>
    </location>
    <ligand>
        <name>ATP</name>
        <dbReference type="ChEBI" id="CHEBI:30616"/>
    </ligand>
</feature>
<feature type="binding site" evidence="13 16">
    <location>
        <position position="256"/>
    </location>
    <ligand>
        <name>ATP</name>
        <dbReference type="ChEBI" id="CHEBI:30616"/>
    </ligand>
</feature>
<feature type="binding site" description="in other chain" evidence="11 14">
    <location>
        <position position="257"/>
    </location>
    <ligand>
        <name>substrate</name>
        <note>ligand shared between dimeric partners</note>
    </ligand>
</feature>
<feature type="modified residue" description="N-acetylthreonine" evidence="17">
    <location>
        <position position="2"/>
    </location>
</feature>
<feature type="strand" evidence="18">
    <location>
        <begin position="2"/>
        <end position="7"/>
    </location>
</feature>
<feature type="strand" evidence="18">
    <location>
        <begin position="10"/>
        <end position="16"/>
    </location>
</feature>
<feature type="helix" evidence="18">
    <location>
        <begin position="22"/>
        <end position="25"/>
    </location>
</feature>
<feature type="helix" evidence="18">
    <location>
        <begin position="30"/>
        <end position="32"/>
    </location>
</feature>
<feature type="strand" evidence="20">
    <location>
        <begin position="34"/>
        <end position="38"/>
    </location>
</feature>
<feature type="strand" evidence="18">
    <location>
        <begin position="40"/>
        <end position="47"/>
    </location>
</feature>
<feature type="helix" evidence="18">
    <location>
        <begin position="49"/>
        <end position="59"/>
    </location>
</feature>
<feature type="strand" evidence="18">
    <location>
        <begin position="63"/>
        <end position="67"/>
    </location>
</feature>
<feature type="helix" evidence="18">
    <location>
        <begin position="72"/>
        <end position="74"/>
    </location>
</feature>
<feature type="helix" evidence="18">
    <location>
        <begin position="75"/>
        <end position="82"/>
    </location>
</feature>
<feature type="turn" evidence="18">
    <location>
        <begin position="83"/>
        <end position="85"/>
    </location>
</feature>
<feature type="helix" evidence="19">
    <location>
        <begin position="88"/>
        <end position="90"/>
    </location>
</feature>
<feature type="strand" evidence="18">
    <location>
        <begin position="100"/>
        <end position="106"/>
    </location>
</feature>
<feature type="strand" evidence="18">
    <location>
        <begin position="112"/>
        <end position="117"/>
    </location>
</feature>
<feature type="helix" evidence="18">
    <location>
        <begin position="119"/>
        <end position="126"/>
    </location>
</feature>
<feature type="helix" evidence="18">
    <location>
        <begin position="129"/>
        <end position="136"/>
    </location>
</feature>
<feature type="strand" evidence="18">
    <location>
        <begin position="140"/>
        <end position="146"/>
    </location>
</feature>
<feature type="helix" evidence="18">
    <location>
        <begin position="149"/>
        <end position="162"/>
    </location>
</feature>
<feature type="strand" evidence="18">
    <location>
        <begin position="166"/>
        <end position="169"/>
    </location>
</feature>
<feature type="helix" evidence="18">
    <location>
        <begin position="171"/>
        <end position="175"/>
    </location>
</feature>
<feature type="helix" evidence="18">
    <location>
        <begin position="179"/>
        <end position="183"/>
    </location>
</feature>
<feature type="turn" evidence="18">
    <location>
        <begin position="184"/>
        <end position="188"/>
    </location>
</feature>
<feature type="strand" evidence="18">
    <location>
        <begin position="190"/>
        <end position="195"/>
    </location>
</feature>
<feature type="helix" evidence="18">
    <location>
        <begin position="196"/>
        <end position="206"/>
    </location>
</feature>
<feature type="helix" evidence="18">
    <location>
        <begin position="210"/>
        <end position="214"/>
    </location>
</feature>
<feature type="strand" evidence="18">
    <location>
        <begin position="220"/>
        <end position="223"/>
    </location>
</feature>
<feature type="helix" evidence="18">
    <location>
        <begin position="225"/>
        <end position="227"/>
    </location>
</feature>
<feature type="strand" evidence="18">
    <location>
        <begin position="229"/>
        <end position="232"/>
    </location>
</feature>
<feature type="strand" evidence="18">
    <location>
        <begin position="238"/>
        <end position="241"/>
    </location>
</feature>
<feature type="helix" evidence="18">
    <location>
        <begin position="255"/>
        <end position="268"/>
    </location>
</feature>
<feature type="helix" evidence="18">
    <location>
        <begin position="273"/>
        <end position="288"/>
    </location>
</feature>
<feature type="strand" evidence="18">
    <location>
        <begin position="290"/>
        <end position="294"/>
    </location>
</feature>
<feature type="helix" evidence="18">
    <location>
        <begin position="300"/>
        <end position="311"/>
    </location>
</feature>
<feature type="helix" evidence="18">
    <location>
        <begin position="313"/>
        <end position="320"/>
    </location>
</feature>
<accession>P9WID5</accession>
<accession>L0T8X3</accession>
<accession>P83734</accession>
<accession>Q10391</accession>
<protein>
    <recommendedName>
        <fullName evidence="5 6">Adenosine kinase</fullName>
        <shortName evidence="7 8">ADK</shortName>
        <shortName evidence="5 6">AK</shortName>
        <ecNumber evidence="1 2">2.7.1.20</ecNumber>
    </recommendedName>
</protein>